<dbReference type="EMBL" id="AB010386">
    <property type="protein sequence ID" value="BAA24439.1"/>
    <property type="molecule type" value="mRNA"/>
</dbReference>
<dbReference type="EMBL" id="AF244933">
    <property type="protein sequence ID" value="AAF64188.1"/>
    <property type="molecule type" value="mRNA"/>
</dbReference>
<dbReference type="EMBL" id="DQ680162">
    <property type="protein sequence ID" value="ABG73601.1"/>
    <property type="molecule type" value="mRNA"/>
</dbReference>
<dbReference type="EMBL" id="DQ852341">
    <property type="protein sequence ID" value="ABH10826.1"/>
    <property type="molecule type" value="mRNA"/>
</dbReference>
<dbReference type="EMBL" id="D84216">
    <property type="protein sequence ID" value="BAA20884.1"/>
    <property type="molecule type" value="mRNA"/>
</dbReference>
<dbReference type="RefSeq" id="NP_001075460.1">
    <property type="nucleotide sequence ID" value="NM_001081991.1"/>
</dbReference>
<dbReference type="PDB" id="2RIG">
    <property type="method" value="X-ray"/>
    <property type="resolution" value="2.30 A"/>
    <property type="chains" value="A=24-167"/>
</dbReference>
<dbReference type="PDBsum" id="2RIG"/>
<dbReference type="SMR" id="P30123"/>
<dbReference type="FunCoup" id="P30123">
    <property type="interactions" value="19"/>
</dbReference>
<dbReference type="STRING" id="9986.ENSOCUP00000039594"/>
<dbReference type="GlyCosmos" id="P30123">
    <property type="glycosylation" value="3 sites, No reported glycans"/>
</dbReference>
<dbReference type="PaxDb" id="9986-ENSOCUP00000021866"/>
<dbReference type="Ensembl" id="ENSOCUT00000030109.3">
    <property type="protein sequence ID" value="ENSOCUP00000021866.1"/>
    <property type="gene ID" value="ENSOCUG00000024937.3"/>
</dbReference>
<dbReference type="GeneID" id="100008602"/>
<dbReference type="KEGG" id="ocu:100008602"/>
<dbReference type="CTD" id="3458"/>
<dbReference type="eggNOG" id="ENOG502SBGW">
    <property type="taxonomic scope" value="Eukaryota"/>
</dbReference>
<dbReference type="GeneTree" id="ENSGT00390000007831"/>
<dbReference type="HOGENOM" id="CLU_135106_0_0_1"/>
<dbReference type="InParanoid" id="P30123"/>
<dbReference type="OMA" id="QIVSMYL"/>
<dbReference type="OrthoDB" id="9937106at2759"/>
<dbReference type="TreeFam" id="TF336308"/>
<dbReference type="EvolutionaryTrace" id="P30123"/>
<dbReference type="Proteomes" id="UP000001811">
    <property type="component" value="Chromosome 4"/>
</dbReference>
<dbReference type="Bgee" id="ENSOCUG00000024937">
    <property type="expression patterns" value="Expressed in blood and 2 other cell types or tissues"/>
</dbReference>
<dbReference type="GO" id="GO:0005615">
    <property type="term" value="C:extracellular space"/>
    <property type="evidence" value="ECO:0007669"/>
    <property type="project" value="UniProtKB-KW"/>
</dbReference>
<dbReference type="GO" id="GO:0005125">
    <property type="term" value="F:cytokine activity"/>
    <property type="evidence" value="ECO:0007669"/>
    <property type="project" value="UniProtKB-KW"/>
</dbReference>
<dbReference type="GO" id="GO:0005133">
    <property type="term" value="F:type II interferon receptor binding"/>
    <property type="evidence" value="ECO:0007669"/>
    <property type="project" value="InterPro"/>
</dbReference>
<dbReference type="GO" id="GO:0002250">
    <property type="term" value="P:adaptive immune response"/>
    <property type="evidence" value="ECO:0007669"/>
    <property type="project" value="TreeGrafter"/>
</dbReference>
<dbReference type="GO" id="GO:0051607">
    <property type="term" value="P:defense response to virus"/>
    <property type="evidence" value="ECO:0007669"/>
    <property type="project" value="UniProtKB-KW"/>
</dbReference>
<dbReference type="GO" id="GO:0006959">
    <property type="term" value="P:humoral immune response"/>
    <property type="evidence" value="ECO:0007669"/>
    <property type="project" value="TreeGrafter"/>
</dbReference>
<dbReference type="GO" id="GO:0010508">
    <property type="term" value="P:positive regulation of autophagy"/>
    <property type="evidence" value="ECO:0000250"/>
    <property type="project" value="UniProtKB"/>
</dbReference>
<dbReference type="FunFam" id="1.20.1250.10:FF:000007">
    <property type="entry name" value="Interferon gamma"/>
    <property type="match status" value="1"/>
</dbReference>
<dbReference type="Gene3D" id="1.20.1250.10">
    <property type="match status" value="1"/>
</dbReference>
<dbReference type="InterPro" id="IPR009079">
    <property type="entry name" value="4_helix_cytokine-like_core"/>
</dbReference>
<dbReference type="InterPro" id="IPR002069">
    <property type="entry name" value="Interferon_gamma"/>
</dbReference>
<dbReference type="PANTHER" id="PTHR11419">
    <property type="entry name" value="INTERFERON GAMMA"/>
    <property type="match status" value="1"/>
</dbReference>
<dbReference type="PANTHER" id="PTHR11419:SF0">
    <property type="entry name" value="INTERFERON GAMMA"/>
    <property type="match status" value="1"/>
</dbReference>
<dbReference type="Pfam" id="PF00714">
    <property type="entry name" value="IFN-gamma"/>
    <property type="match status" value="1"/>
</dbReference>
<dbReference type="PIRSF" id="PIRSF001936">
    <property type="entry name" value="IFN-gamma"/>
    <property type="match status" value="1"/>
</dbReference>
<dbReference type="SUPFAM" id="SSF47266">
    <property type="entry name" value="4-helical cytokines"/>
    <property type="match status" value="1"/>
</dbReference>
<comment type="function">
    <text evidence="2 3">Type II interferon produced by immune cells such as T-cells and NK cells that plays crucial roles in antimicrobial, antiviral, and antitumor responses by activating effector immune cells and enhancing antigen presentation. Primarily signals through the JAK-STAT pathway after interaction with its receptor IFNGR1 to affect gene regulation. Upon IFNG binding, IFNGR1 intracellular domain opens out to allow association of downstream signaling components JAK2, JAK1 and STAT1, leading to STAT1 activation, nuclear translocation and transcription of IFNG-regulated genes. Many of the induced genes are transcription factors such as IRF1 that are able to further drive regulation of a next wave of transcription. Plays a role in class I antigen presentation pathway by inducing a replacement of catalytic proteasome subunits with immunoproteasome subunits. In turn, increases the quantity, quality, and repertoire of peptides for class I MHC loading. Increases the efficiency of peptide generation also by inducing the expression of activator PA28 that associates with the proteasome and alters its proteolytic cleavage preference. Up-regulates as well MHC II complexes on the cell surface by promoting expression of several key molecules such as cathepsins B/CTSB, H/CTSH, and L/CTSL (By similarity). Participates in the regulation of hematopoietic stem cells during development and under homeostatic conditions by affecting their development, quiescence, and differentiation (By similarity).</text>
</comment>
<comment type="subunit">
    <text evidence="2">Homodimer. Interacts with IFNGR1 (via extracellular domain); this interaction promotes IFNGR1 dimerization.</text>
</comment>
<comment type="subcellular location">
    <subcellularLocation>
        <location evidence="2">Secreted</location>
    </subcellularLocation>
</comment>
<comment type="tissue specificity">
    <text>Released primarily from activated T lymphocytes.</text>
</comment>
<comment type="similarity">
    <text evidence="5">Belongs to the type II (or gamma) interferon family.</text>
</comment>
<feature type="signal peptide" evidence="1">
    <location>
        <begin position="1"/>
        <end position="23"/>
    </location>
</feature>
<feature type="chain" id="PRO_0000016456" description="Interferon gamma">
    <location>
        <begin position="24"/>
        <end position="167"/>
    </location>
</feature>
<feature type="modified residue" description="Pyrrolidone carboxylic acid" evidence="2">
    <location>
        <position position="24"/>
    </location>
</feature>
<feature type="glycosylation site" description="N-linked (GlcNAc...) asparagine" evidence="4">
    <location>
        <position position="41"/>
    </location>
</feature>
<feature type="glycosylation site" description="N-linked (GlcNAc...) asparagine" evidence="4">
    <location>
        <position position="108"/>
    </location>
</feature>
<feature type="glycosylation site" description="N-linked (GlcNAc...) asparagine" evidence="4">
    <location>
        <position position="117"/>
    </location>
</feature>
<feature type="sequence conflict" description="In Ref. 5; BAA20884." evidence="5" ref="5">
    <location>
        <position position="123"/>
    </location>
</feature>
<protein>
    <recommendedName>
        <fullName>Interferon gamma</fullName>
        <shortName>IFN-gamma</shortName>
    </recommendedName>
</protein>
<reference key="1">
    <citation type="submission" date="1998-01" db="EMBL/GenBank/DDBJ databases">
        <title>Rabbit interferon gamma.</title>
        <authorList>
            <person name="Yuasa T."/>
            <person name="Isono T."/>
            <person name="Tambe Y."/>
        </authorList>
    </citation>
    <scope>NUCLEOTIDE SEQUENCE [MRNA]</scope>
    <source>
        <strain>B/Jas</strain>
    </source>
</reference>
<reference key="2">
    <citation type="submission" date="2000-03" db="EMBL/GenBank/DDBJ databases">
        <title>Oryctolagus cuniculus gamma interferon mRNA, complete cds.</title>
        <authorList>
            <person name="Perkins H.D."/>
            <person name="Lei S."/>
            <person name="van Leeuwen B."/>
            <person name="Kerr P.J."/>
        </authorList>
    </citation>
    <scope>NUCLEOTIDE SEQUENCE [MRNA]</scope>
    <source>
        <tissue>Lymph node</tissue>
    </source>
</reference>
<reference key="3">
    <citation type="submission" date="2006-06" db="EMBL/GenBank/DDBJ databases">
        <title>Cloning and expression of IFN gamma gene of Chinese white rabbit.</title>
        <authorList>
            <person name="Qiao J."/>
            <person name="Meng Q."/>
            <person name="Cai X."/>
        </authorList>
    </citation>
    <scope>NUCLEOTIDE SEQUENCE [MRNA]</scope>
    <source>
        <strain>Chinese white</strain>
    </source>
</reference>
<reference key="4">
    <citation type="submission" date="2006-07" db="EMBL/GenBank/DDBJ databases">
        <title>Cloning and sequence analysis of IFN-gamma gene in rabbit.</title>
        <authorList>
            <person name="Huang D."/>
            <person name="Yang G."/>
        </authorList>
    </citation>
    <scope>NUCLEOTIDE SEQUENCE [MRNA]</scope>
</reference>
<reference key="5">
    <citation type="journal article" date="1996" name="Immunogenetics">
        <title>Expression of the interferon-gamma and interleukin-10 genes in rabbit HTLV-I-transformed T-cell lines.</title>
        <authorList>
            <person name="Isono T."/>
            <person name="Nagano Y."/>
            <person name="Seto A."/>
        </authorList>
    </citation>
    <scope>NUCLEOTIDE SEQUENCE [MRNA] OF 81-136</scope>
    <source>
        <strain>B/Jas</strain>
    </source>
</reference>
<reference key="6">
    <citation type="journal article" date="1991" name="J. Biol. Chem.">
        <title>Crystal structure of recombinant rabbit interferon-gamma at 2.7-A resolution.</title>
        <authorList>
            <person name="Samudzi C.T."/>
            <person name="Burton L.E."/>
            <person name="Rubin J.R."/>
        </authorList>
    </citation>
    <scope>X-RAY CRYSTALLOGRAPHY (2.7 ANGSTROMS)</scope>
</reference>
<gene>
    <name type="primary">IFNG</name>
</gene>
<evidence type="ECO:0000250" key="1"/>
<evidence type="ECO:0000250" key="2">
    <source>
        <dbReference type="UniProtKB" id="P01579"/>
    </source>
</evidence>
<evidence type="ECO:0000250" key="3">
    <source>
        <dbReference type="UniProtKB" id="P01580"/>
    </source>
</evidence>
<evidence type="ECO:0000255" key="4"/>
<evidence type="ECO:0000305" key="5"/>
<proteinExistence type="evidence at protein level"/>
<name>IFNG_RABIT</name>
<accession>P30123</accession>
<accession>P79215</accession>
<accession>Q0PW35</accession>
<sequence>MSYTSYILAFQLCLILGSYGCYCQDTLTRETEHLKAYLKANTSDVANGGPLFLNILRNWKEESDNKIIQSQIVSFYFKLFDNLKDHEVIKKSMESIKEDIFVKFFNSNLTKMDDFQNLTRISVDDRLVQRKAVSELSNVLNFLSPKSNLKKRKRSQTLFRGRRASKY</sequence>
<organism>
    <name type="scientific">Oryctolagus cuniculus</name>
    <name type="common">Rabbit</name>
    <dbReference type="NCBI Taxonomy" id="9986"/>
    <lineage>
        <taxon>Eukaryota</taxon>
        <taxon>Metazoa</taxon>
        <taxon>Chordata</taxon>
        <taxon>Craniata</taxon>
        <taxon>Vertebrata</taxon>
        <taxon>Euteleostomi</taxon>
        <taxon>Mammalia</taxon>
        <taxon>Eutheria</taxon>
        <taxon>Euarchontoglires</taxon>
        <taxon>Glires</taxon>
        <taxon>Lagomorpha</taxon>
        <taxon>Leporidae</taxon>
        <taxon>Oryctolagus</taxon>
    </lineage>
</organism>
<keyword id="KW-0002">3D-structure</keyword>
<keyword id="KW-0051">Antiviral defense</keyword>
<keyword id="KW-0202">Cytokine</keyword>
<keyword id="KW-0325">Glycoprotein</keyword>
<keyword id="KW-0341">Growth regulation</keyword>
<keyword id="KW-0873">Pyrrolidone carboxylic acid</keyword>
<keyword id="KW-1185">Reference proteome</keyword>
<keyword id="KW-0964">Secreted</keyword>
<keyword id="KW-0732">Signal</keyword>